<dbReference type="EMBL" id="BA000032">
    <property type="protein sequence ID" value="BAC62927.1"/>
    <property type="molecule type" value="Genomic_DNA"/>
</dbReference>
<dbReference type="RefSeq" id="NP_801094.1">
    <property type="nucleotide sequence ID" value="NC_004605.1"/>
</dbReference>
<dbReference type="RefSeq" id="WP_005462713.1">
    <property type="nucleotide sequence ID" value="NC_004605.1"/>
</dbReference>
<dbReference type="GeneID" id="1192280"/>
<dbReference type="KEGG" id="vpa:VPA1584"/>
<dbReference type="PATRIC" id="fig|223926.6.peg.4504"/>
<dbReference type="eggNOG" id="COG3110">
    <property type="taxonomic scope" value="Bacteria"/>
</dbReference>
<dbReference type="HOGENOM" id="CLU_073782_1_0_6"/>
<dbReference type="Proteomes" id="UP000002493">
    <property type="component" value="Chromosome 2"/>
</dbReference>
<dbReference type="HAMAP" id="MF_00789">
    <property type="entry name" value="UPF0319"/>
    <property type="match status" value="1"/>
</dbReference>
<dbReference type="InterPro" id="IPR018635">
    <property type="entry name" value="UPF0319"/>
</dbReference>
<dbReference type="NCBIfam" id="NF003383">
    <property type="entry name" value="PRK04517.1"/>
    <property type="match status" value="1"/>
</dbReference>
<dbReference type="PANTHER" id="PTHR38108">
    <property type="entry name" value="UPF0319 PROTEIN YCCT"/>
    <property type="match status" value="1"/>
</dbReference>
<dbReference type="PANTHER" id="PTHR38108:SF1">
    <property type="entry name" value="UPF0319 PROTEIN YCCT"/>
    <property type="match status" value="1"/>
</dbReference>
<dbReference type="Pfam" id="PF09829">
    <property type="entry name" value="DUF2057"/>
    <property type="match status" value="1"/>
</dbReference>
<name>Y5584_VIBPA</name>
<evidence type="ECO:0000255" key="1">
    <source>
        <dbReference type="HAMAP-Rule" id="MF_00789"/>
    </source>
</evidence>
<organism>
    <name type="scientific">Vibrio parahaemolyticus serotype O3:K6 (strain RIMD 2210633)</name>
    <dbReference type="NCBI Taxonomy" id="223926"/>
    <lineage>
        <taxon>Bacteria</taxon>
        <taxon>Pseudomonadati</taxon>
        <taxon>Pseudomonadota</taxon>
        <taxon>Gammaproteobacteria</taxon>
        <taxon>Vibrionales</taxon>
        <taxon>Vibrionaceae</taxon>
        <taxon>Vibrio</taxon>
    </lineage>
</organism>
<protein>
    <recommendedName>
        <fullName evidence="1">UPF0319 protein VPA1584</fullName>
    </recommendedName>
</protein>
<accession>Q87FU4</accession>
<comment type="similarity">
    <text evidence="1">Belongs to the UPF0319 family.</text>
</comment>
<gene>
    <name type="ordered locus">VPA1584</name>
</gene>
<sequence length="223" mass="24346">MKLIKPLTCALALAMSGMAFADVTVSVPDDVSVLAANGEKAKLSGGFFASEKALTLPDGVNQVVFRYAPYFNQGNDRLSVESDVIVARFDTANAELTIEVPKYRNMRDAEENIKDLDWKLVDGSGKAVAVDQDKLIKPGMQIGRDYVREIEDYNRAGGTAAVAFAGAATMQPVTLPAKIPEDMKQARATAVKADSTAEEMLHFWYQKADAETKARFKAYINQQ</sequence>
<reference key="1">
    <citation type="journal article" date="2003" name="Lancet">
        <title>Genome sequence of Vibrio parahaemolyticus: a pathogenic mechanism distinct from that of V. cholerae.</title>
        <authorList>
            <person name="Makino K."/>
            <person name="Oshima K."/>
            <person name="Kurokawa K."/>
            <person name="Yokoyama K."/>
            <person name="Uda T."/>
            <person name="Tagomori K."/>
            <person name="Iijima Y."/>
            <person name="Najima M."/>
            <person name="Nakano M."/>
            <person name="Yamashita A."/>
            <person name="Kubota Y."/>
            <person name="Kimura S."/>
            <person name="Yasunaga T."/>
            <person name="Honda T."/>
            <person name="Shinagawa H."/>
            <person name="Hattori M."/>
            <person name="Iida T."/>
        </authorList>
    </citation>
    <scope>NUCLEOTIDE SEQUENCE [LARGE SCALE GENOMIC DNA]</scope>
    <source>
        <strain>RIMD 2210633</strain>
    </source>
</reference>
<feature type="signal peptide" evidence="1">
    <location>
        <begin position="1"/>
        <end position="21"/>
    </location>
</feature>
<feature type="chain" id="PRO_0000036310" description="UPF0319 protein VPA1584">
    <location>
        <begin position="22"/>
        <end position="223"/>
    </location>
</feature>
<proteinExistence type="inferred from homology"/>
<keyword id="KW-0732">Signal</keyword>